<name>ISPF_STRGG</name>
<keyword id="KW-0414">Isoprene biosynthesis</keyword>
<keyword id="KW-0456">Lyase</keyword>
<keyword id="KW-0479">Metal-binding</keyword>
<sequence length="172" mass="17225">MVSETPGAGSPAAPVIPLVGIGTDIHAFEEGRKLWCAGLKWEGEGPGLAGHSDADVVAHAACNALFSAAGLGDLGQHFGTGRPEWSGAAGITLLTEAARIVRAGGFEIGNVAVQVVGSRPKIGKRREEAQKVLSEAVGAPVSLSAATSDGLGFTGRGEGIAGLATALVYRTA</sequence>
<protein>
    <recommendedName>
        <fullName evidence="1">2-C-methyl-D-erythritol 2,4-cyclodiphosphate synthase</fullName>
        <shortName evidence="1">MECDP-synthase</shortName>
        <shortName evidence="1">MECPP-synthase</shortName>
        <shortName evidence="1">MECPS</shortName>
        <ecNumber evidence="1">4.6.1.12</ecNumber>
    </recommendedName>
</protein>
<accession>B1VS88</accession>
<reference key="1">
    <citation type="journal article" date="2008" name="J. Bacteriol.">
        <title>Genome sequence of the streptomycin-producing microorganism Streptomyces griseus IFO 13350.</title>
        <authorList>
            <person name="Ohnishi Y."/>
            <person name="Ishikawa J."/>
            <person name="Hara H."/>
            <person name="Suzuki H."/>
            <person name="Ikenoya M."/>
            <person name="Ikeda H."/>
            <person name="Yamashita A."/>
            <person name="Hattori M."/>
            <person name="Horinouchi S."/>
        </authorList>
    </citation>
    <scope>NUCLEOTIDE SEQUENCE [LARGE SCALE GENOMIC DNA]</scope>
    <source>
        <strain>JCM 4626 / CBS 651.72 / NBRC 13350 / KCC S-0626 / ISP 5235</strain>
    </source>
</reference>
<evidence type="ECO:0000255" key="1">
    <source>
        <dbReference type="HAMAP-Rule" id="MF_00107"/>
    </source>
</evidence>
<gene>
    <name evidence="1" type="primary">ispF</name>
    <name type="ordered locus">SGR_4013</name>
</gene>
<dbReference type="EC" id="4.6.1.12" evidence="1"/>
<dbReference type="EMBL" id="AP009493">
    <property type="protein sequence ID" value="BAG20842.1"/>
    <property type="molecule type" value="Genomic_DNA"/>
</dbReference>
<dbReference type="RefSeq" id="WP_012380305.1">
    <property type="nucleotide sequence ID" value="NC_010572.1"/>
</dbReference>
<dbReference type="SMR" id="B1VS88"/>
<dbReference type="KEGG" id="sgr:SGR_4013"/>
<dbReference type="PATRIC" id="fig|455632.4.peg.4085"/>
<dbReference type="eggNOG" id="COG0245">
    <property type="taxonomic scope" value="Bacteria"/>
</dbReference>
<dbReference type="HOGENOM" id="CLU_084630_1_0_11"/>
<dbReference type="UniPathway" id="UPA00056">
    <property type="reaction ID" value="UER00095"/>
</dbReference>
<dbReference type="Proteomes" id="UP000001685">
    <property type="component" value="Chromosome"/>
</dbReference>
<dbReference type="GO" id="GO:0008685">
    <property type="term" value="F:2-C-methyl-D-erythritol 2,4-cyclodiphosphate synthase activity"/>
    <property type="evidence" value="ECO:0007669"/>
    <property type="project" value="UniProtKB-UniRule"/>
</dbReference>
<dbReference type="GO" id="GO:0046872">
    <property type="term" value="F:metal ion binding"/>
    <property type="evidence" value="ECO:0007669"/>
    <property type="project" value="UniProtKB-KW"/>
</dbReference>
<dbReference type="GO" id="GO:0019288">
    <property type="term" value="P:isopentenyl diphosphate biosynthetic process, methylerythritol 4-phosphate pathway"/>
    <property type="evidence" value="ECO:0007669"/>
    <property type="project" value="UniProtKB-UniRule"/>
</dbReference>
<dbReference type="GO" id="GO:0016114">
    <property type="term" value="P:terpenoid biosynthetic process"/>
    <property type="evidence" value="ECO:0007669"/>
    <property type="project" value="InterPro"/>
</dbReference>
<dbReference type="CDD" id="cd00554">
    <property type="entry name" value="MECDP_synthase"/>
    <property type="match status" value="1"/>
</dbReference>
<dbReference type="FunFam" id="3.30.1330.50:FF:000003">
    <property type="entry name" value="2-C-methyl-D-erythritol 2,4-cyclodiphosphate synthase"/>
    <property type="match status" value="1"/>
</dbReference>
<dbReference type="Gene3D" id="3.30.1330.50">
    <property type="entry name" value="2-C-methyl-D-erythritol 2,4-cyclodiphosphate synthase"/>
    <property type="match status" value="1"/>
</dbReference>
<dbReference type="HAMAP" id="MF_00107">
    <property type="entry name" value="IspF"/>
    <property type="match status" value="1"/>
</dbReference>
<dbReference type="InterPro" id="IPR003526">
    <property type="entry name" value="MECDP_synthase"/>
</dbReference>
<dbReference type="InterPro" id="IPR020555">
    <property type="entry name" value="MECDP_synthase_CS"/>
</dbReference>
<dbReference type="InterPro" id="IPR036571">
    <property type="entry name" value="MECDP_synthase_sf"/>
</dbReference>
<dbReference type="NCBIfam" id="TIGR00151">
    <property type="entry name" value="ispF"/>
    <property type="match status" value="1"/>
</dbReference>
<dbReference type="PANTHER" id="PTHR43181">
    <property type="entry name" value="2-C-METHYL-D-ERYTHRITOL 2,4-CYCLODIPHOSPHATE SYNTHASE, CHLOROPLASTIC"/>
    <property type="match status" value="1"/>
</dbReference>
<dbReference type="PANTHER" id="PTHR43181:SF1">
    <property type="entry name" value="2-C-METHYL-D-ERYTHRITOL 2,4-CYCLODIPHOSPHATE SYNTHASE, CHLOROPLASTIC"/>
    <property type="match status" value="1"/>
</dbReference>
<dbReference type="Pfam" id="PF02542">
    <property type="entry name" value="YgbB"/>
    <property type="match status" value="1"/>
</dbReference>
<dbReference type="SUPFAM" id="SSF69765">
    <property type="entry name" value="IpsF-like"/>
    <property type="match status" value="1"/>
</dbReference>
<dbReference type="PROSITE" id="PS01350">
    <property type="entry name" value="ISPF"/>
    <property type="match status" value="1"/>
</dbReference>
<feature type="chain" id="PRO_1000094293" description="2-C-methyl-D-erythritol 2,4-cyclodiphosphate synthase">
    <location>
        <begin position="1"/>
        <end position="172"/>
    </location>
</feature>
<feature type="binding site" evidence="1">
    <location>
        <begin position="24"/>
        <end position="26"/>
    </location>
    <ligand>
        <name>4-CDP-2-C-methyl-D-erythritol 2-phosphate</name>
        <dbReference type="ChEBI" id="CHEBI:57919"/>
    </ligand>
</feature>
<feature type="binding site" evidence="1">
    <location>
        <position position="24"/>
    </location>
    <ligand>
        <name>a divalent metal cation</name>
        <dbReference type="ChEBI" id="CHEBI:60240"/>
    </ligand>
</feature>
<feature type="binding site" evidence="1">
    <location>
        <position position="26"/>
    </location>
    <ligand>
        <name>a divalent metal cation</name>
        <dbReference type="ChEBI" id="CHEBI:60240"/>
    </ligand>
</feature>
<feature type="binding site" evidence="1">
    <location>
        <begin position="51"/>
        <end position="52"/>
    </location>
    <ligand>
        <name>4-CDP-2-C-methyl-D-erythritol 2-phosphate</name>
        <dbReference type="ChEBI" id="CHEBI:57919"/>
    </ligand>
</feature>
<feature type="binding site" evidence="1">
    <location>
        <position position="59"/>
    </location>
    <ligand>
        <name>a divalent metal cation</name>
        <dbReference type="ChEBI" id="CHEBI:60240"/>
    </ligand>
</feature>
<feature type="binding site" evidence="1">
    <location>
        <begin position="73"/>
        <end position="75"/>
    </location>
    <ligand>
        <name>4-CDP-2-C-methyl-D-erythritol 2-phosphate</name>
        <dbReference type="ChEBI" id="CHEBI:57919"/>
    </ligand>
</feature>
<feature type="binding site" evidence="1">
    <location>
        <position position="153"/>
    </location>
    <ligand>
        <name>4-CDP-2-C-methyl-D-erythritol 2-phosphate</name>
        <dbReference type="ChEBI" id="CHEBI:57919"/>
    </ligand>
</feature>
<feature type="binding site" evidence="1">
    <location>
        <position position="156"/>
    </location>
    <ligand>
        <name>4-CDP-2-C-methyl-D-erythritol 2-phosphate</name>
        <dbReference type="ChEBI" id="CHEBI:57919"/>
    </ligand>
</feature>
<feature type="site" description="Transition state stabilizer" evidence="1">
    <location>
        <position position="51"/>
    </location>
</feature>
<feature type="site" description="Transition state stabilizer" evidence="1">
    <location>
        <position position="147"/>
    </location>
</feature>
<comment type="function">
    <text evidence="1">Involved in the biosynthesis of isopentenyl diphosphate (IPP) and dimethylallyl diphosphate (DMAPP), two major building blocks of isoprenoid compounds. Catalyzes the conversion of 4-diphosphocytidyl-2-C-methyl-D-erythritol 2-phosphate (CDP-ME2P) to 2-C-methyl-D-erythritol 2,4-cyclodiphosphate (ME-CPP) with a corresponding release of cytidine 5-monophosphate (CMP).</text>
</comment>
<comment type="catalytic activity">
    <reaction evidence="1">
        <text>4-CDP-2-C-methyl-D-erythritol 2-phosphate = 2-C-methyl-D-erythritol 2,4-cyclic diphosphate + CMP</text>
        <dbReference type="Rhea" id="RHEA:23864"/>
        <dbReference type="ChEBI" id="CHEBI:57919"/>
        <dbReference type="ChEBI" id="CHEBI:58483"/>
        <dbReference type="ChEBI" id="CHEBI:60377"/>
        <dbReference type="EC" id="4.6.1.12"/>
    </reaction>
</comment>
<comment type="cofactor">
    <cofactor evidence="1">
        <name>a divalent metal cation</name>
        <dbReference type="ChEBI" id="CHEBI:60240"/>
    </cofactor>
    <text evidence="1">Binds 1 divalent metal cation per subunit.</text>
</comment>
<comment type="pathway">
    <text evidence="1">Isoprenoid biosynthesis; isopentenyl diphosphate biosynthesis via DXP pathway; isopentenyl diphosphate from 1-deoxy-D-xylulose 5-phosphate: step 4/6.</text>
</comment>
<comment type="subunit">
    <text evidence="1">Homotrimer.</text>
</comment>
<comment type="similarity">
    <text evidence="1">Belongs to the IspF family.</text>
</comment>
<organism>
    <name type="scientific">Streptomyces griseus subsp. griseus (strain JCM 4626 / CBS 651.72 / NBRC 13350 / KCC S-0626 / ISP 5235)</name>
    <dbReference type="NCBI Taxonomy" id="455632"/>
    <lineage>
        <taxon>Bacteria</taxon>
        <taxon>Bacillati</taxon>
        <taxon>Actinomycetota</taxon>
        <taxon>Actinomycetes</taxon>
        <taxon>Kitasatosporales</taxon>
        <taxon>Streptomycetaceae</taxon>
        <taxon>Streptomyces</taxon>
    </lineage>
</organism>
<proteinExistence type="inferred from homology"/>